<geneLocation type="chloroplast"/>
<reference key="1">
    <citation type="journal article" date="2007" name="Mol. Genet. Genomics">
        <title>Chloroplast genomes of the diatoms Phaeodactylum tricornutum and Thalassiosira pseudonana: comparison with other plastid genomes of the red lineage.</title>
        <authorList>
            <person name="Oudot-Le Secq M.-P."/>
            <person name="Grimwood J."/>
            <person name="Shapiro H."/>
            <person name="Armbrust E.V."/>
            <person name="Bowler C."/>
            <person name="Green B.R."/>
        </authorList>
    </citation>
    <scope>NUCLEOTIDE SEQUENCE [LARGE SCALE GENOMIC DNA]</scope>
    <source>
        <strain>CCMP1335 / NEPCC58 / CCAP 1085/12</strain>
    </source>
</reference>
<name>PSBF_THAPS</name>
<organism>
    <name type="scientific">Thalassiosira pseudonana</name>
    <name type="common">Marine diatom</name>
    <name type="synonym">Cyclotella nana</name>
    <dbReference type="NCBI Taxonomy" id="35128"/>
    <lineage>
        <taxon>Eukaryota</taxon>
        <taxon>Sar</taxon>
        <taxon>Stramenopiles</taxon>
        <taxon>Ochrophyta</taxon>
        <taxon>Bacillariophyta</taxon>
        <taxon>Coscinodiscophyceae</taxon>
        <taxon>Thalassiosirophycidae</taxon>
        <taxon>Thalassiosirales</taxon>
        <taxon>Thalassiosiraceae</taxon>
        <taxon>Thalassiosira</taxon>
    </lineage>
</organism>
<protein>
    <recommendedName>
        <fullName evidence="1">Cytochrome b559 subunit beta</fullName>
    </recommendedName>
    <alternativeName>
        <fullName evidence="1">PSII reaction center subunit VI</fullName>
    </alternativeName>
</protein>
<gene>
    <name evidence="1" type="primary">psbF</name>
</gene>
<evidence type="ECO:0000255" key="1">
    <source>
        <dbReference type="HAMAP-Rule" id="MF_00643"/>
    </source>
</evidence>
<evidence type="ECO:0007829" key="2">
    <source>
        <dbReference type="PDB" id="8IWH"/>
    </source>
</evidence>
<proteinExistence type="evidence at protein level"/>
<accession>A0T0U1</accession>
<keyword id="KW-0002">3D-structure</keyword>
<keyword id="KW-0150">Chloroplast</keyword>
<keyword id="KW-0249">Electron transport</keyword>
<keyword id="KW-0349">Heme</keyword>
<keyword id="KW-0408">Iron</keyword>
<keyword id="KW-0472">Membrane</keyword>
<keyword id="KW-0479">Metal-binding</keyword>
<keyword id="KW-0602">Photosynthesis</keyword>
<keyword id="KW-0604">Photosystem II</keyword>
<keyword id="KW-0934">Plastid</keyword>
<keyword id="KW-0793">Thylakoid</keyword>
<keyword id="KW-0812">Transmembrane</keyword>
<keyword id="KW-1133">Transmembrane helix</keyword>
<keyword id="KW-0813">Transport</keyword>
<comment type="function">
    <text evidence="1">This b-type cytochrome is tightly associated with the reaction center of photosystem II (PSII). PSII is a light-driven water:plastoquinone oxidoreductase that uses light energy to abstract electrons from H(2)O, generating O(2) and a proton gradient subsequently used for ATP formation. It consists of a core antenna complex that captures photons, and an electron transfer chain that converts photonic excitation into a charge separation.</text>
</comment>
<comment type="cofactor">
    <cofactor evidence="1">
        <name>heme b</name>
        <dbReference type="ChEBI" id="CHEBI:60344"/>
    </cofactor>
    <text evidence="1">With its partner (PsbE) binds heme. PSII binds additional chlorophylls, carotenoids and specific lipids.</text>
</comment>
<comment type="subunit">
    <text evidence="1">Heterodimer of an alpha subunit and a beta subunit. PSII is composed of 1 copy each of membrane proteins PsbA, PsbB, PsbC, PsbD, PsbE, PsbF, PsbH, PsbI, PsbJ, PsbK, PsbL, PsbM, PsbT, PsbX, PsbY, PsbZ, Psb30/Ycf12, at least 3 peripheral proteins of the oxygen-evolving complex and a large number of cofactors. It forms dimeric complexes.</text>
</comment>
<comment type="subcellular location">
    <subcellularLocation>
        <location evidence="1">Plastid</location>
        <location evidence="1">Chloroplast thylakoid membrane</location>
        <topology evidence="1">Single-pass membrane protein</topology>
    </subcellularLocation>
</comment>
<comment type="similarity">
    <text evidence="1">Belongs to the PsbE/PsbF family.</text>
</comment>
<sequence length="43" mass="4910">MTKNINQPVAYPIFTFRWLAVHGLAIPTVFFLGGITAMQFIQR</sequence>
<feature type="chain" id="PRO_0000275745" description="Cytochrome b559 subunit beta">
    <location>
        <begin position="1"/>
        <end position="43"/>
    </location>
</feature>
<feature type="transmembrane region" description="Helical" evidence="1">
    <location>
        <begin position="18"/>
        <end position="34"/>
    </location>
</feature>
<feature type="binding site" description="axial binding residue" evidence="1">
    <location>
        <position position="22"/>
    </location>
    <ligand>
        <name>heme</name>
        <dbReference type="ChEBI" id="CHEBI:30413"/>
        <note>ligand shared with alpha subunit</note>
    </ligand>
    <ligandPart>
        <name>Fe</name>
        <dbReference type="ChEBI" id="CHEBI:18248"/>
    </ligandPart>
</feature>
<feature type="helix" evidence="2">
    <location>
        <begin position="16"/>
        <end position="23"/>
    </location>
</feature>
<feature type="helix" evidence="2">
    <location>
        <begin position="26"/>
        <end position="38"/>
    </location>
</feature>
<dbReference type="EMBL" id="EF067921">
    <property type="protein sequence ID" value="ABK20776.1"/>
    <property type="molecule type" value="Genomic_DNA"/>
</dbReference>
<dbReference type="RefSeq" id="YP_874553.1">
    <property type="nucleotide sequence ID" value="NC_008589.1"/>
</dbReference>
<dbReference type="PDB" id="8IWH">
    <property type="method" value="EM"/>
    <property type="resolution" value="2.68 A"/>
    <property type="chains" value="F/f=1-43"/>
</dbReference>
<dbReference type="PDB" id="8J5K">
    <property type="method" value="EM"/>
    <property type="resolution" value="2.93 A"/>
    <property type="chains" value="F/f=13-43"/>
</dbReference>
<dbReference type="PDBsum" id="8IWH"/>
<dbReference type="PDBsum" id="8J5K"/>
<dbReference type="EMDB" id="EMD-35766"/>
<dbReference type="SMR" id="A0T0U1"/>
<dbReference type="STRING" id="35128.A0T0U1"/>
<dbReference type="GeneID" id="4524848"/>
<dbReference type="InParanoid" id="A0T0U1"/>
<dbReference type="GO" id="GO:0009535">
    <property type="term" value="C:chloroplast thylakoid membrane"/>
    <property type="evidence" value="ECO:0007669"/>
    <property type="project" value="UniProtKB-SubCell"/>
</dbReference>
<dbReference type="GO" id="GO:0009539">
    <property type="term" value="C:photosystem II reaction center"/>
    <property type="evidence" value="ECO:0007669"/>
    <property type="project" value="InterPro"/>
</dbReference>
<dbReference type="GO" id="GO:0009055">
    <property type="term" value="F:electron transfer activity"/>
    <property type="evidence" value="ECO:0007669"/>
    <property type="project" value="UniProtKB-UniRule"/>
</dbReference>
<dbReference type="GO" id="GO:0020037">
    <property type="term" value="F:heme binding"/>
    <property type="evidence" value="ECO:0007669"/>
    <property type="project" value="InterPro"/>
</dbReference>
<dbReference type="GO" id="GO:0005506">
    <property type="term" value="F:iron ion binding"/>
    <property type="evidence" value="ECO:0007669"/>
    <property type="project" value="UniProtKB-UniRule"/>
</dbReference>
<dbReference type="GO" id="GO:0009767">
    <property type="term" value="P:photosynthetic electron transport chain"/>
    <property type="evidence" value="ECO:0007669"/>
    <property type="project" value="InterPro"/>
</dbReference>
<dbReference type="HAMAP" id="MF_00643">
    <property type="entry name" value="PSII_PsbF"/>
    <property type="match status" value="1"/>
</dbReference>
<dbReference type="InterPro" id="IPR006241">
    <property type="entry name" value="PSII_cyt_b559_bsu"/>
</dbReference>
<dbReference type="InterPro" id="IPR006216">
    <property type="entry name" value="PSII_cyt_b559_CS"/>
</dbReference>
<dbReference type="InterPro" id="IPR013081">
    <property type="entry name" value="PSII_cyt_b559_N"/>
</dbReference>
<dbReference type="NCBIfam" id="TIGR01333">
    <property type="entry name" value="cyt_b559_beta"/>
    <property type="match status" value="1"/>
</dbReference>
<dbReference type="Pfam" id="PF00283">
    <property type="entry name" value="Cytochrom_B559"/>
    <property type="match status" value="1"/>
</dbReference>
<dbReference type="PIRSF" id="PIRSF000037">
    <property type="entry name" value="PsbF"/>
    <property type="match status" value="1"/>
</dbReference>
<dbReference type="SUPFAM" id="SSF161045">
    <property type="entry name" value="Cytochrome b559 subunits"/>
    <property type="match status" value="1"/>
</dbReference>
<dbReference type="PROSITE" id="PS00537">
    <property type="entry name" value="CYTOCHROME_B559"/>
    <property type="match status" value="1"/>
</dbReference>